<comment type="function">
    <text evidence="1">DNA repair enzyme involved in the repair of deaminated bases. Selectively cleaves double-stranded DNA at the second phosphodiester bond 3' to a deoxyinosine leaving behind the intact lesion on the nicked DNA.</text>
</comment>
<comment type="catalytic activity">
    <reaction evidence="1">
        <text>Endonucleolytic cleavage at apurinic or apyrimidinic sites to products with a 5'-phosphate.</text>
        <dbReference type="EC" id="3.1.21.7"/>
    </reaction>
</comment>
<comment type="cofactor">
    <cofactor evidence="1">
        <name>Mg(2+)</name>
        <dbReference type="ChEBI" id="CHEBI:18420"/>
    </cofactor>
</comment>
<comment type="subcellular location">
    <subcellularLocation>
        <location evidence="1">Cytoplasm</location>
    </subcellularLocation>
</comment>
<comment type="similarity">
    <text evidence="1">Belongs to the endonuclease V family.</text>
</comment>
<keyword id="KW-0963">Cytoplasm</keyword>
<keyword id="KW-0227">DNA damage</keyword>
<keyword id="KW-0234">DNA repair</keyword>
<keyword id="KW-0255">Endonuclease</keyword>
<keyword id="KW-0378">Hydrolase</keyword>
<keyword id="KW-0460">Magnesium</keyword>
<keyword id="KW-0479">Metal-binding</keyword>
<keyword id="KW-0540">Nuclease</keyword>
<accession>Q0TA67</accession>
<proteinExistence type="inferred from homology"/>
<name>NFI_ECOL5</name>
<sequence length="223" mass="24673">MDLASLRAQQIELASSVIREDRLDKDPPDLIAGADVGFEQGGEVTRAAMVLLKYPSLELVEYKVARIATTMPYIPGFLSFREYPALLAAWEMLSQKPDLVFVDGHGISHPRRLGVASHFGLLVDVPTIGVAKKRLCGKFEPLSSEPGALAPLMDKGEQLAWVWRSKARCNPLFIATGHRVSVDSALAWVQRCMKGYRLPEPTRWADAVASERPAFVRYTANQP</sequence>
<feature type="chain" id="PRO_1000046995" description="Endonuclease V">
    <location>
        <begin position="1"/>
        <end position="223"/>
    </location>
</feature>
<feature type="binding site" evidence="1">
    <location>
        <position position="35"/>
    </location>
    <ligand>
        <name>Mg(2+)</name>
        <dbReference type="ChEBI" id="CHEBI:18420"/>
    </ligand>
</feature>
<feature type="binding site" evidence="1">
    <location>
        <position position="103"/>
    </location>
    <ligand>
        <name>Mg(2+)</name>
        <dbReference type="ChEBI" id="CHEBI:18420"/>
    </ligand>
</feature>
<feature type="site" description="Interaction with target DNA" evidence="1">
    <location>
        <position position="73"/>
    </location>
</feature>
<gene>
    <name evidence="1" type="primary">nfi</name>
    <name type="ordered locus">ECP_4211</name>
</gene>
<protein>
    <recommendedName>
        <fullName evidence="1">Endonuclease V</fullName>
        <ecNumber evidence="1">3.1.21.7</ecNumber>
    </recommendedName>
    <alternativeName>
        <fullName evidence="1">Deoxyinosine 3'endonuclease</fullName>
    </alternativeName>
    <alternativeName>
        <fullName evidence="1">Deoxyribonuclease V</fullName>
        <shortName evidence="1">DNase V</shortName>
    </alternativeName>
</protein>
<dbReference type="EC" id="3.1.21.7" evidence="1"/>
<dbReference type="EMBL" id="CP000247">
    <property type="protein sequence ID" value="ABG72162.1"/>
    <property type="molecule type" value="Genomic_DNA"/>
</dbReference>
<dbReference type="RefSeq" id="WP_000362388.1">
    <property type="nucleotide sequence ID" value="NC_008253.1"/>
</dbReference>
<dbReference type="SMR" id="Q0TA67"/>
<dbReference type="GeneID" id="75169444"/>
<dbReference type="KEGG" id="ecp:ECP_4211"/>
<dbReference type="HOGENOM" id="CLU_047631_1_0_6"/>
<dbReference type="Proteomes" id="UP000009182">
    <property type="component" value="Chromosome"/>
</dbReference>
<dbReference type="GO" id="GO:0005737">
    <property type="term" value="C:cytoplasm"/>
    <property type="evidence" value="ECO:0007669"/>
    <property type="project" value="UniProtKB-SubCell"/>
</dbReference>
<dbReference type="GO" id="GO:0043737">
    <property type="term" value="F:deoxyribonuclease V activity"/>
    <property type="evidence" value="ECO:0007669"/>
    <property type="project" value="UniProtKB-UniRule"/>
</dbReference>
<dbReference type="GO" id="GO:0000287">
    <property type="term" value="F:magnesium ion binding"/>
    <property type="evidence" value="ECO:0007669"/>
    <property type="project" value="UniProtKB-UniRule"/>
</dbReference>
<dbReference type="GO" id="GO:0016891">
    <property type="term" value="F:RNA endonuclease activity, producing 5'-phosphomonoesters"/>
    <property type="evidence" value="ECO:0007669"/>
    <property type="project" value="TreeGrafter"/>
</dbReference>
<dbReference type="GO" id="GO:0003727">
    <property type="term" value="F:single-stranded RNA binding"/>
    <property type="evidence" value="ECO:0007669"/>
    <property type="project" value="TreeGrafter"/>
</dbReference>
<dbReference type="GO" id="GO:0006281">
    <property type="term" value="P:DNA repair"/>
    <property type="evidence" value="ECO:0007669"/>
    <property type="project" value="UniProtKB-UniRule"/>
</dbReference>
<dbReference type="CDD" id="cd06559">
    <property type="entry name" value="Endonuclease_V"/>
    <property type="match status" value="1"/>
</dbReference>
<dbReference type="FunFam" id="3.30.2170.10:FF:000001">
    <property type="entry name" value="Endonuclease V"/>
    <property type="match status" value="1"/>
</dbReference>
<dbReference type="Gene3D" id="3.30.2170.10">
    <property type="entry name" value="archaeoglobus fulgidus dsm 4304 superfamily"/>
    <property type="match status" value="1"/>
</dbReference>
<dbReference type="HAMAP" id="MF_00801">
    <property type="entry name" value="Endonuclease_5"/>
    <property type="match status" value="1"/>
</dbReference>
<dbReference type="InterPro" id="IPR007581">
    <property type="entry name" value="Endonuclease-V"/>
</dbReference>
<dbReference type="NCBIfam" id="NF008629">
    <property type="entry name" value="PRK11617.1"/>
    <property type="match status" value="1"/>
</dbReference>
<dbReference type="PANTHER" id="PTHR28511">
    <property type="entry name" value="ENDONUCLEASE V"/>
    <property type="match status" value="1"/>
</dbReference>
<dbReference type="PANTHER" id="PTHR28511:SF1">
    <property type="entry name" value="ENDONUCLEASE V"/>
    <property type="match status" value="1"/>
</dbReference>
<dbReference type="Pfam" id="PF04493">
    <property type="entry name" value="Endonuclease_5"/>
    <property type="match status" value="1"/>
</dbReference>
<organism>
    <name type="scientific">Escherichia coli O6:K15:H31 (strain 536 / UPEC)</name>
    <dbReference type="NCBI Taxonomy" id="362663"/>
    <lineage>
        <taxon>Bacteria</taxon>
        <taxon>Pseudomonadati</taxon>
        <taxon>Pseudomonadota</taxon>
        <taxon>Gammaproteobacteria</taxon>
        <taxon>Enterobacterales</taxon>
        <taxon>Enterobacteriaceae</taxon>
        <taxon>Escherichia</taxon>
    </lineage>
</organism>
<reference key="1">
    <citation type="journal article" date="2006" name="Mol. Microbiol.">
        <title>Role of pathogenicity island-associated integrases in the genome plasticity of uropathogenic Escherichia coli strain 536.</title>
        <authorList>
            <person name="Hochhut B."/>
            <person name="Wilde C."/>
            <person name="Balling G."/>
            <person name="Middendorf B."/>
            <person name="Dobrindt U."/>
            <person name="Brzuszkiewicz E."/>
            <person name="Gottschalk G."/>
            <person name="Carniel E."/>
            <person name="Hacker J."/>
        </authorList>
    </citation>
    <scope>NUCLEOTIDE SEQUENCE [LARGE SCALE GENOMIC DNA]</scope>
    <source>
        <strain>536 / UPEC</strain>
    </source>
</reference>
<evidence type="ECO:0000255" key="1">
    <source>
        <dbReference type="HAMAP-Rule" id="MF_00801"/>
    </source>
</evidence>